<feature type="chain" id="PRO_1000189914" description="Co-chaperone protein HscB">
    <location>
        <begin position="1"/>
        <end position="171"/>
    </location>
</feature>
<feature type="domain" description="J" evidence="1">
    <location>
        <begin position="2"/>
        <end position="74"/>
    </location>
</feature>
<sequence>MDYFTLFGLPARYQLDTQALSLRFQDLQRQYHPDKFASGSQAEQLAAVQQSATINQAWQTLRHPLMRAEYLLSLHGFDLASEQHTVRDTAFLMEQLELREELDEIEQAKDEARLESFIKRVKKMFDTRHQLMVEQLDNETWDAAADTVRKLRFLDKLRSSAEQLEEKLLDF</sequence>
<organism>
    <name type="scientific">Escherichia coli O81 (strain ED1a)</name>
    <dbReference type="NCBI Taxonomy" id="585397"/>
    <lineage>
        <taxon>Bacteria</taxon>
        <taxon>Pseudomonadati</taxon>
        <taxon>Pseudomonadota</taxon>
        <taxon>Gammaproteobacteria</taxon>
        <taxon>Enterobacterales</taxon>
        <taxon>Enterobacteriaceae</taxon>
        <taxon>Escherichia</taxon>
    </lineage>
</organism>
<gene>
    <name evidence="1" type="primary">hscB</name>
    <name type="ordered locus">ECED1_2958</name>
</gene>
<keyword id="KW-0143">Chaperone</keyword>
<proteinExistence type="inferred from homology"/>
<evidence type="ECO:0000255" key="1">
    <source>
        <dbReference type="HAMAP-Rule" id="MF_00682"/>
    </source>
</evidence>
<reference key="1">
    <citation type="journal article" date="2009" name="PLoS Genet.">
        <title>Organised genome dynamics in the Escherichia coli species results in highly diverse adaptive paths.</title>
        <authorList>
            <person name="Touchon M."/>
            <person name="Hoede C."/>
            <person name="Tenaillon O."/>
            <person name="Barbe V."/>
            <person name="Baeriswyl S."/>
            <person name="Bidet P."/>
            <person name="Bingen E."/>
            <person name="Bonacorsi S."/>
            <person name="Bouchier C."/>
            <person name="Bouvet O."/>
            <person name="Calteau A."/>
            <person name="Chiapello H."/>
            <person name="Clermont O."/>
            <person name="Cruveiller S."/>
            <person name="Danchin A."/>
            <person name="Diard M."/>
            <person name="Dossat C."/>
            <person name="Karoui M.E."/>
            <person name="Frapy E."/>
            <person name="Garry L."/>
            <person name="Ghigo J.M."/>
            <person name="Gilles A.M."/>
            <person name="Johnson J."/>
            <person name="Le Bouguenec C."/>
            <person name="Lescat M."/>
            <person name="Mangenot S."/>
            <person name="Martinez-Jehanne V."/>
            <person name="Matic I."/>
            <person name="Nassif X."/>
            <person name="Oztas S."/>
            <person name="Petit M.A."/>
            <person name="Pichon C."/>
            <person name="Rouy Z."/>
            <person name="Ruf C.S."/>
            <person name="Schneider D."/>
            <person name="Tourret J."/>
            <person name="Vacherie B."/>
            <person name="Vallenet D."/>
            <person name="Medigue C."/>
            <person name="Rocha E.P.C."/>
            <person name="Denamur E."/>
        </authorList>
    </citation>
    <scope>NUCLEOTIDE SEQUENCE [LARGE SCALE GENOMIC DNA]</scope>
    <source>
        <strain>ED1a</strain>
    </source>
</reference>
<dbReference type="EMBL" id="CU928162">
    <property type="protein sequence ID" value="CAR09127.2"/>
    <property type="molecule type" value="Genomic_DNA"/>
</dbReference>
<dbReference type="RefSeq" id="WP_000384413.1">
    <property type="nucleotide sequence ID" value="NC_011745.1"/>
</dbReference>
<dbReference type="SMR" id="B7MYG1"/>
<dbReference type="GeneID" id="75172640"/>
<dbReference type="KEGG" id="ecq:ECED1_2958"/>
<dbReference type="HOGENOM" id="CLU_068529_2_0_6"/>
<dbReference type="Proteomes" id="UP000000748">
    <property type="component" value="Chromosome"/>
</dbReference>
<dbReference type="GO" id="GO:1990230">
    <property type="term" value="C:iron-sulfur cluster transfer complex"/>
    <property type="evidence" value="ECO:0007669"/>
    <property type="project" value="TreeGrafter"/>
</dbReference>
<dbReference type="GO" id="GO:0001671">
    <property type="term" value="F:ATPase activator activity"/>
    <property type="evidence" value="ECO:0007669"/>
    <property type="project" value="InterPro"/>
</dbReference>
<dbReference type="GO" id="GO:0051087">
    <property type="term" value="F:protein-folding chaperone binding"/>
    <property type="evidence" value="ECO:0007669"/>
    <property type="project" value="InterPro"/>
</dbReference>
<dbReference type="GO" id="GO:0044571">
    <property type="term" value="P:[2Fe-2S] cluster assembly"/>
    <property type="evidence" value="ECO:0007669"/>
    <property type="project" value="InterPro"/>
</dbReference>
<dbReference type="GO" id="GO:0051259">
    <property type="term" value="P:protein complex oligomerization"/>
    <property type="evidence" value="ECO:0007669"/>
    <property type="project" value="InterPro"/>
</dbReference>
<dbReference type="GO" id="GO:0006457">
    <property type="term" value="P:protein folding"/>
    <property type="evidence" value="ECO:0007669"/>
    <property type="project" value="UniProtKB-UniRule"/>
</dbReference>
<dbReference type="CDD" id="cd06257">
    <property type="entry name" value="DnaJ"/>
    <property type="match status" value="1"/>
</dbReference>
<dbReference type="FunFam" id="1.10.287.110:FF:000008">
    <property type="entry name" value="Co-chaperone protein HscB"/>
    <property type="match status" value="1"/>
</dbReference>
<dbReference type="FunFam" id="1.20.1280.20:FF:000001">
    <property type="entry name" value="Co-chaperone protein HscB"/>
    <property type="match status" value="1"/>
</dbReference>
<dbReference type="Gene3D" id="1.10.287.110">
    <property type="entry name" value="DnaJ domain"/>
    <property type="match status" value="1"/>
</dbReference>
<dbReference type="Gene3D" id="1.20.1280.20">
    <property type="entry name" value="HscB, C-terminal domain"/>
    <property type="match status" value="1"/>
</dbReference>
<dbReference type="HAMAP" id="MF_00682">
    <property type="entry name" value="HscB"/>
    <property type="match status" value="1"/>
</dbReference>
<dbReference type="InterPro" id="IPR001623">
    <property type="entry name" value="DnaJ_domain"/>
</dbReference>
<dbReference type="InterPro" id="IPR004640">
    <property type="entry name" value="HscB"/>
</dbReference>
<dbReference type="InterPro" id="IPR036386">
    <property type="entry name" value="HscB_C_sf"/>
</dbReference>
<dbReference type="InterPro" id="IPR009073">
    <property type="entry name" value="HscB_oligo_C"/>
</dbReference>
<dbReference type="InterPro" id="IPR036869">
    <property type="entry name" value="J_dom_sf"/>
</dbReference>
<dbReference type="NCBIfam" id="TIGR00714">
    <property type="entry name" value="hscB"/>
    <property type="match status" value="1"/>
</dbReference>
<dbReference type="NCBIfam" id="NF003449">
    <property type="entry name" value="PRK05014.1"/>
    <property type="match status" value="1"/>
</dbReference>
<dbReference type="PANTHER" id="PTHR14021">
    <property type="entry name" value="IRON-SULFUR CLUSTER CO-CHAPERONE PROTEIN HSCB"/>
    <property type="match status" value="1"/>
</dbReference>
<dbReference type="PANTHER" id="PTHR14021:SF15">
    <property type="entry name" value="IRON-SULFUR CLUSTER CO-CHAPERONE PROTEIN HSCB"/>
    <property type="match status" value="1"/>
</dbReference>
<dbReference type="Pfam" id="PF07743">
    <property type="entry name" value="HSCB_C"/>
    <property type="match status" value="1"/>
</dbReference>
<dbReference type="SMART" id="SM00271">
    <property type="entry name" value="DnaJ"/>
    <property type="match status" value="1"/>
</dbReference>
<dbReference type="SUPFAM" id="SSF46565">
    <property type="entry name" value="Chaperone J-domain"/>
    <property type="match status" value="1"/>
</dbReference>
<dbReference type="SUPFAM" id="SSF47144">
    <property type="entry name" value="HSC20 (HSCB), C-terminal oligomerisation domain"/>
    <property type="match status" value="1"/>
</dbReference>
<dbReference type="PROSITE" id="PS50076">
    <property type="entry name" value="DNAJ_2"/>
    <property type="match status" value="1"/>
</dbReference>
<name>HSCB_ECO81</name>
<protein>
    <recommendedName>
        <fullName evidence="1">Co-chaperone protein HscB</fullName>
    </recommendedName>
    <alternativeName>
        <fullName evidence="1">Hsc20</fullName>
    </alternativeName>
</protein>
<comment type="function">
    <text evidence="1">Co-chaperone involved in the maturation of iron-sulfur cluster-containing proteins. Seems to help targeting proteins to be folded toward HscA.</text>
</comment>
<comment type="subunit">
    <text evidence="1">Interacts with HscA and stimulates its ATPase activity. Interacts with IscU.</text>
</comment>
<comment type="similarity">
    <text evidence="1">Belongs to the HscB family.</text>
</comment>
<accession>B7MYG1</accession>